<dbReference type="EMBL" id="AK018670">
    <property type="protein sequence ID" value="BAE20432.1"/>
    <property type="molecule type" value="mRNA"/>
</dbReference>
<dbReference type="EMBL" id="AK131860">
    <property type="protein sequence ID" value="BAE20834.1"/>
    <property type="molecule type" value="mRNA"/>
</dbReference>
<dbReference type="EMBL" id="AK136454">
    <property type="protein sequence ID" value="BAE22984.1"/>
    <property type="molecule type" value="mRNA"/>
</dbReference>
<dbReference type="EMBL" id="AC102287">
    <property type="status" value="NOT_ANNOTATED_CDS"/>
    <property type="molecule type" value="Genomic_DNA"/>
</dbReference>
<dbReference type="CCDS" id="CCDS90402.1"/>
<dbReference type="RefSeq" id="NP_001339815.1">
    <property type="nucleotide sequence ID" value="NM_001352886.1"/>
</dbReference>
<dbReference type="SMR" id="Q3V2G4"/>
<dbReference type="FunCoup" id="Q3V2G4">
    <property type="interactions" value="3"/>
</dbReference>
<dbReference type="STRING" id="10090.ENSMUSP00000147515"/>
<dbReference type="GlyCosmos" id="Q3V2G4">
    <property type="glycosylation" value="1 site, No reported glycans"/>
</dbReference>
<dbReference type="GlyGen" id="Q3V2G4">
    <property type="glycosylation" value="1 site"/>
</dbReference>
<dbReference type="Ensembl" id="ENSMUST00000098713.5">
    <property type="protein sequence ID" value="ENSMUSP00000147515.2"/>
    <property type="gene ID" value="ENSMUSG00000074300.5"/>
</dbReference>
<dbReference type="GeneID" id="407795"/>
<dbReference type="AGR" id="MGI:3039572"/>
<dbReference type="MGI" id="MGI:3039572">
    <property type="gene designation" value="Smim31"/>
</dbReference>
<dbReference type="VEuPathDB" id="HostDB:ENSMUSG00000074300"/>
<dbReference type="GeneTree" id="ENSGT00770000121728"/>
<dbReference type="InParanoid" id="Q3V2G4"/>
<dbReference type="OMA" id="FTNLEMA"/>
<dbReference type="ChiTaRS" id="Smim31">
    <property type="organism name" value="mouse"/>
</dbReference>
<dbReference type="PRO" id="PR:Q3V2G4"/>
<dbReference type="Proteomes" id="UP000000589">
    <property type="component" value="Chromosome 8"/>
</dbReference>
<dbReference type="RNAct" id="Q3V2G4">
    <property type="molecule type" value="protein"/>
</dbReference>
<dbReference type="Bgee" id="ENSMUSG00000074300">
    <property type="expression patterns" value="Expressed in left colon and 29 other cell types or tissues"/>
</dbReference>
<dbReference type="GO" id="GO:0016020">
    <property type="term" value="C:membrane"/>
    <property type="evidence" value="ECO:0007669"/>
    <property type="project" value="UniProtKB-SubCell"/>
</dbReference>
<comment type="subcellular location">
    <subcellularLocation>
        <location evidence="1">Membrane</location>
        <topology evidence="1">Single-pass membrane protein</topology>
    </subcellularLocation>
</comment>
<reference key="1">
    <citation type="journal article" date="2005" name="Science">
        <title>The transcriptional landscape of the mammalian genome.</title>
        <authorList>
            <person name="Carninci P."/>
            <person name="Kasukawa T."/>
            <person name="Katayama S."/>
            <person name="Gough J."/>
            <person name="Frith M.C."/>
            <person name="Maeda N."/>
            <person name="Oyama R."/>
            <person name="Ravasi T."/>
            <person name="Lenhard B."/>
            <person name="Wells C."/>
            <person name="Kodzius R."/>
            <person name="Shimokawa K."/>
            <person name="Bajic V.B."/>
            <person name="Brenner S.E."/>
            <person name="Batalov S."/>
            <person name="Forrest A.R."/>
            <person name="Zavolan M."/>
            <person name="Davis M.J."/>
            <person name="Wilming L.G."/>
            <person name="Aidinis V."/>
            <person name="Allen J.E."/>
            <person name="Ambesi-Impiombato A."/>
            <person name="Apweiler R."/>
            <person name="Aturaliya R.N."/>
            <person name="Bailey T.L."/>
            <person name="Bansal M."/>
            <person name="Baxter L."/>
            <person name="Beisel K.W."/>
            <person name="Bersano T."/>
            <person name="Bono H."/>
            <person name="Chalk A.M."/>
            <person name="Chiu K.P."/>
            <person name="Choudhary V."/>
            <person name="Christoffels A."/>
            <person name="Clutterbuck D.R."/>
            <person name="Crowe M.L."/>
            <person name="Dalla E."/>
            <person name="Dalrymple B.P."/>
            <person name="de Bono B."/>
            <person name="Della Gatta G."/>
            <person name="di Bernardo D."/>
            <person name="Down T."/>
            <person name="Engstrom P."/>
            <person name="Fagiolini M."/>
            <person name="Faulkner G."/>
            <person name="Fletcher C.F."/>
            <person name="Fukushima T."/>
            <person name="Furuno M."/>
            <person name="Futaki S."/>
            <person name="Gariboldi M."/>
            <person name="Georgii-Hemming P."/>
            <person name="Gingeras T.R."/>
            <person name="Gojobori T."/>
            <person name="Green R.E."/>
            <person name="Gustincich S."/>
            <person name="Harbers M."/>
            <person name="Hayashi Y."/>
            <person name="Hensch T.K."/>
            <person name="Hirokawa N."/>
            <person name="Hill D."/>
            <person name="Huminiecki L."/>
            <person name="Iacono M."/>
            <person name="Ikeo K."/>
            <person name="Iwama A."/>
            <person name="Ishikawa T."/>
            <person name="Jakt M."/>
            <person name="Kanapin A."/>
            <person name="Katoh M."/>
            <person name="Kawasawa Y."/>
            <person name="Kelso J."/>
            <person name="Kitamura H."/>
            <person name="Kitano H."/>
            <person name="Kollias G."/>
            <person name="Krishnan S.P."/>
            <person name="Kruger A."/>
            <person name="Kummerfeld S.K."/>
            <person name="Kurochkin I.V."/>
            <person name="Lareau L.F."/>
            <person name="Lazarevic D."/>
            <person name="Lipovich L."/>
            <person name="Liu J."/>
            <person name="Liuni S."/>
            <person name="McWilliam S."/>
            <person name="Madan Babu M."/>
            <person name="Madera M."/>
            <person name="Marchionni L."/>
            <person name="Matsuda H."/>
            <person name="Matsuzawa S."/>
            <person name="Miki H."/>
            <person name="Mignone F."/>
            <person name="Miyake S."/>
            <person name="Morris K."/>
            <person name="Mottagui-Tabar S."/>
            <person name="Mulder N."/>
            <person name="Nakano N."/>
            <person name="Nakauchi H."/>
            <person name="Ng P."/>
            <person name="Nilsson R."/>
            <person name="Nishiguchi S."/>
            <person name="Nishikawa S."/>
            <person name="Nori F."/>
            <person name="Ohara O."/>
            <person name="Okazaki Y."/>
            <person name="Orlando V."/>
            <person name="Pang K.C."/>
            <person name="Pavan W.J."/>
            <person name="Pavesi G."/>
            <person name="Pesole G."/>
            <person name="Petrovsky N."/>
            <person name="Piazza S."/>
            <person name="Reed J."/>
            <person name="Reid J.F."/>
            <person name="Ring B.Z."/>
            <person name="Ringwald M."/>
            <person name="Rost B."/>
            <person name="Ruan Y."/>
            <person name="Salzberg S.L."/>
            <person name="Sandelin A."/>
            <person name="Schneider C."/>
            <person name="Schoenbach C."/>
            <person name="Sekiguchi K."/>
            <person name="Semple C.A."/>
            <person name="Seno S."/>
            <person name="Sessa L."/>
            <person name="Sheng Y."/>
            <person name="Shibata Y."/>
            <person name="Shimada H."/>
            <person name="Shimada K."/>
            <person name="Silva D."/>
            <person name="Sinclair B."/>
            <person name="Sperling S."/>
            <person name="Stupka E."/>
            <person name="Sugiura K."/>
            <person name="Sultana R."/>
            <person name="Takenaka Y."/>
            <person name="Taki K."/>
            <person name="Tammoja K."/>
            <person name="Tan S.L."/>
            <person name="Tang S."/>
            <person name="Taylor M.S."/>
            <person name="Tegner J."/>
            <person name="Teichmann S.A."/>
            <person name="Ueda H.R."/>
            <person name="van Nimwegen E."/>
            <person name="Verardo R."/>
            <person name="Wei C.L."/>
            <person name="Yagi K."/>
            <person name="Yamanishi H."/>
            <person name="Zabarovsky E."/>
            <person name="Zhu S."/>
            <person name="Zimmer A."/>
            <person name="Hide W."/>
            <person name="Bult C."/>
            <person name="Grimmond S.M."/>
            <person name="Teasdale R.D."/>
            <person name="Liu E.T."/>
            <person name="Brusic V."/>
            <person name="Quackenbush J."/>
            <person name="Wahlestedt C."/>
            <person name="Mattick J.S."/>
            <person name="Hume D.A."/>
            <person name="Kai C."/>
            <person name="Sasaki D."/>
            <person name="Tomaru Y."/>
            <person name="Fukuda S."/>
            <person name="Kanamori-Katayama M."/>
            <person name="Suzuki M."/>
            <person name="Aoki J."/>
            <person name="Arakawa T."/>
            <person name="Iida J."/>
            <person name="Imamura K."/>
            <person name="Itoh M."/>
            <person name="Kato T."/>
            <person name="Kawaji H."/>
            <person name="Kawagashira N."/>
            <person name="Kawashima T."/>
            <person name="Kojima M."/>
            <person name="Kondo S."/>
            <person name="Konno H."/>
            <person name="Nakano K."/>
            <person name="Ninomiya N."/>
            <person name="Nishio T."/>
            <person name="Okada M."/>
            <person name="Plessy C."/>
            <person name="Shibata K."/>
            <person name="Shiraki T."/>
            <person name="Suzuki S."/>
            <person name="Tagami M."/>
            <person name="Waki K."/>
            <person name="Watahiki A."/>
            <person name="Okamura-Oho Y."/>
            <person name="Suzuki H."/>
            <person name="Kawai J."/>
            <person name="Hayashizaki Y."/>
        </authorList>
    </citation>
    <scope>NUCLEOTIDE SEQUENCE [LARGE SCALE MRNA]</scope>
</reference>
<reference key="2">
    <citation type="journal article" date="2009" name="PLoS Biol.">
        <title>Lineage-specific biology revealed by a finished genome assembly of the mouse.</title>
        <authorList>
            <person name="Church D.M."/>
            <person name="Goodstadt L."/>
            <person name="Hillier L.W."/>
            <person name="Zody M.C."/>
            <person name="Goldstein S."/>
            <person name="She X."/>
            <person name="Bult C.J."/>
            <person name="Agarwala R."/>
            <person name="Cherry J.L."/>
            <person name="DiCuccio M."/>
            <person name="Hlavina W."/>
            <person name="Kapustin Y."/>
            <person name="Meric P."/>
            <person name="Maglott D."/>
            <person name="Birtle Z."/>
            <person name="Marques A.C."/>
            <person name="Graves T."/>
            <person name="Zhou S."/>
            <person name="Teague B."/>
            <person name="Potamousis K."/>
            <person name="Churas C."/>
            <person name="Place M."/>
            <person name="Herschleb J."/>
            <person name="Runnheim R."/>
            <person name="Forrest D."/>
            <person name="Amos-Landgraf J."/>
            <person name="Schwartz D.C."/>
            <person name="Cheng Z."/>
            <person name="Lindblad-Toh K."/>
            <person name="Eichler E.E."/>
            <person name="Ponting C.P."/>
        </authorList>
    </citation>
    <scope>NUCLEOTIDE SEQUENCE [LARGE SCALE GENOMIC DNA]</scope>
    <source>
        <strain>C57BL/6J</strain>
    </source>
</reference>
<protein>
    <recommendedName>
        <fullName evidence="4">Small integral membrane protein 31</fullName>
    </recommendedName>
</protein>
<evidence type="ECO:0000255" key="1"/>
<evidence type="ECO:0000255" key="2">
    <source>
        <dbReference type="PROSITE-ProRule" id="PRU00498"/>
    </source>
</evidence>
<evidence type="ECO:0000256" key="3">
    <source>
        <dbReference type="SAM" id="MobiDB-lite"/>
    </source>
</evidence>
<evidence type="ECO:0000312" key="4">
    <source>
        <dbReference type="MGI" id="MGI:3039572"/>
    </source>
</evidence>
<keyword id="KW-0325">Glycoprotein</keyword>
<keyword id="KW-0472">Membrane</keyword>
<keyword id="KW-1185">Reference proteome</keyword>
<keyword id="KW-0812">Transmembrane</keyword>
<keyword id="KW-1133">Transmembrane helix</keyword>
<feature type="chain" id="PRO_0000443391" description="Small integral membrane protein 31">
    <location>
        <begin position="1"/>
        <end position="71"/>
    </location>
</feature>
<feature type="transmembrane region" description="Helical" evidence="1">
    <location>
        <begin position="8"/>
        <end position="28"/>
    </location>
</feature>
<feature type="region of interest" description="Disordered" evidence="3">
    <location>
        <begin position="48"/>
        <end position="71"/>
    </location>
</feature>
<feature type="compositionally biased region" description="Basic residues" evidence="3">
    <location>
        <begin position="48"/>
        <end position="57"/>
    </location>
</feature>
<feature type="compositionally biased region" description="Basic and acidic residues" evidence="3">
    <location>
        <begin position="58"/>
        <end position="71"/>
    </location>
</feature>
<feature type="glycosylation site" description="N-linked (GlcNAc...) asparagine" evidence="2">
    <location>
        <position position="58"/>
    </location>
</feature>
<sequence length="71" mass="8514">MELPFTNLEVAFILLAFFIFSLFTLASIYTSPNERNEDDDFHLKEKRRKRKEFKGKKNCSDEEHKIETMQP</sequence>
<organism>
    <name type="scientific">Mus musculus</name>
    <name type="common">Mouse</name>
    <dbReference type="NCBI Taxonomy" id="10090"/>
    <lineage>
        <taxon>Eukaryota</taxon>
        <taxon>Metazoa</taxon>
        <taxon>Chordata</taxon>
        <taxon>Craniata</taxon>
        <taxon>Vertebrata</taxon>
        <taxon>Euteleostomi</taxon>
        <taxon>Mammalia</taxon>
        <taxon>Eutheria</taxon>
        <taxon>Euarchontoglires</taxon>
        <taxon>Glires</taxon>
        <taxon>Rodentia</taxon>
        <taxon>Myomorpha</taxon>
        <taxon>Muroidea</taxon>
        <taxon>Muridae</taxon>
        <taxon>Murinae</taxon>
        <taxon>Mus</taxon>
        <taxon>Mus</taxon>
    </lineage>
</organism>
<accession>Q3V2G4</accession>
<gene>
    <name evidence="4" type="primary">Smim31</name>
</gene>
<name>SIM31_MOUSE</name>
<proteinExistence type="inferred from homology"/>